<organism>
    <name type="scientific">Idiomarina loihiensis (strain ATCC BAA-735 / DSM 15497 / L2-TR)</name>
    <dbReference type="NCBI Taxonomy" id="283942"/>
    <lineage>
        <taxon>Bacteria</taxon>
        <taxon>Pseudomonadati</taxon>
        <taxon>Pseudomonadota</taxon>
        <taxon>Gammaproteobacteria</taxon>
        <taxon>Alteromonadales</taxon>
        <taxon>Idiomarinaceae</taxon>
        <taxon>Idiomarina</taxon>
    </lineage>
</organism>
<proteinExistence type="inferred from homology"/>
<comment type="function">
    <text evidence="1">Catalyzes the final step of fatty acid oxidation in which acetyl-CoA is released and the CoA ester of a fatty acid two carbons shorter is formed.</text>
</comment>
<comment type="catalytic activity">
    <reaction evidence="1">
        <text>an acyl-CoA + acetyl-CoA = a 3-oxoacyl-CoA + CoA</text>
        <dbReference type="Rhea" id="RHEA:21564"/>
        <dbReference type="ChEBI" id="CHEBI:57287"/>
        <dbReference type="ChEBI" id="CHEBI:57288"/>
        <dbReference type="ChEBI" id="CHEBI:58342"/>
        <dbReference type="ChEBI" id="CHEBI:90726"/>
        <dbReference type="EC" id="2.3.1.16"/>
    </reaction>
</comment>
<comment type="pathway">
    <text evidence="1">Lipid metabolism; fatty acid beta-oxidation.</text>
</comment>
<comment type="subunit">
    <text evidence="1">Heterotetramer of two alpha chains (FadB) and two beta chains (FadA).</text>
</comment>
<comment type="subcellular location">
    <subcellularLocation>
        <location evidence="1">Cytoplasm</location>
    </subcellularLocation>
</comment>
<comment type="similarity">
    <text evidence="1">Belongs to the thiolase-like superfamily. Thiolase family.</text>
</comment>
<name>FADA_IDILO</name>
<sequence length="387" mass="41249">MKDIVIVDCIRTPMGRSKNGVFRHTRAEDLSAALMKGLLERNPEVDPEELEDIYWGCVQQTLEQGFNIARNSALIAGIPHKVAGVTVNRLCGSSMQALHDATRAIMNGDGDIFMAGGVEHMGHVPMTHGIDFHPGMNKSVAKASGSMGMTAELLSRKFGITREQQDEFGARSHRKAHEATVEGRFAKEIYAMNGHNADGELVRVTEDEVIRPETTAEGLSQLRPVFDPANGTVTAGTSSALSDGAAAMLVMSADKAKELGLTPRVKIRSMAVAGCDPSIMGYGPVPATEKALKRAGVSIDDIDVVELNEAFAAQSLPVLKGLKLFDKMEEKVNLNGGAIALGHPLGCSGARISTTLINLMEEKDAKLGLATMCIGLGQGIATVFERV</sequence>
<accession>Q5QXH8</accession>
<keyword id="KW-0012">Acyltransferase</keyword>
<keyword id="KW-0963">Cytoplasm</keyword>
<keyword id="KW-0276">Fatty acid metabolism</keyword>
<keyword id="KW-0442">Lipid degradation</keyword>
<keyword id="KW-0443">Lipid metabolism</keyword>
<keyword id="KW-1185">Reference proteome</keyword>
<keyword id="KW-0808">Transferase</keyword>
<reference key="1">
    <citation type="journal article" date="2004" name="Proc. Natl. Acad. Sci. U.S.A.">
        <title>Genome sequence of the deep-sea gamma-proteobacterium Idiomarina loihiensis reveals amino acid fermentation as a source of carbon and energy.</title>
        <authorList>
            <person name="Hou S."/>
            <person name="Saw J.H."/>
            <person name="Lee K.S."/>
            <person name="Freitas T.A."/>
            <person name="Belisle C."/>
            <person name="Kawarabayasi Y."/>
            <person name="Donachie S.P."/>
            <person name="Pikina A."/>
            <person name="Galperin M.Y."/>
            <person name="Koonin E.V."/>
            <person name="Makarova K.S."/>
            <person name="Omelchenko M.V."/>
            <person name="Sorokin A."/>
            <person name="Wolf Y.I."/>
            <person name="Li Q.X."/>
            <person name="Keum Y.S."/>
            <person name="Campbell S."/>
            <person name="Denery J."/>
            <person name="Aizawa S."/>
            <person name="Shibata S."/>
            <person name="Malahoff A."/>
            <person name="Alam M."/>
        </authorList>
    </citation>
    <scope>NUCLEOTIDE SEQUENCE [LARGE SCALE GENOMIC DNA]</scope>
    <source>
        <strain>ATCC BAA-735 / DSM 15497 / L2-TR</strain>
    </source>
</reference>
<protein>
    <recommendedName>
        <fullName evidence="1">3-ketoacyl-CoA thiolase</fullName>
        <ecNumber evidence="1">2.3.1.16</ecNumber>
    </recommendedName>
    <alternativeName>
        <fullName evidence="1">Acetyl-CoA acyltransferase</fullName>
    </alternativeName>
    <alternativeName>
        <fullName evidence="1">Beta-ketothiolase</fullName>
    </alternativeName>
    <alternativeName>
        <fullName evidence="1">Fatty acid oxidation complex subunit beta</fullName>
    </alternativeName>
</protein>
<gene>
    <name evidence="1" type="primary">fadA</name>
    <name type="ordered locus">IL0010</name>
</gene>
<feature type="chain" id="PRO_0000206375" description="3-ketoacyl-CoA thiolase">
    <location>
        <begin position="1"/>
        <end position="387"/>
    </location>
</feature>
<feature type="active site" description="Acyl-thioester intermediate" evidence="1">
    <location>
        <position position="91"/>
    </location>
</feature>
<feature type="active site" description="Proton acceptor" evidence="1">
    <location>
        <position position="343"/>
    </location>
</feature>
<feature type="active site" description="Proton acceptor" evidence="1">
    <location>
        <position position="373"/>
    </location>
</feature>
<evidence type="ECO:0000255" key="1">
    <source>
        <dbReference type="HAMAP-Rule" id="MF_01620"/>
    </source>
</evidence>
<dbReference type="EC" id="2.3.1.16" evidence="1"/>
<dbReference type="EMBL" id="AE017340">
    <property type="protein sequence ID" value="AAV80854.1"/>
    <property type="molecule type" value="Genomic_DNA"/>
</dbReference>
<dbReference type="RefSeq" id="WP_011233274.1">
    <property type="nucleotide sequence ID" value="NC_006512.1"/>
</dbReference>
<dbReference type="SMR" id="Q5QXH8"/>
<dbReference type="STRING" id="283942.IL0010"/>
<dbReference type="GeneID" id="41335158"/>
<dbReference type="KEGG" id="ilo:IL0010"/>
<dbReference type="eggNOG" id="COG0183">
    <property type="taxonomic scope" value="Bacteria"/>
</dbReference>
<dbReference type="HOGENOM" id="CLU_031026_2_3_6"/>
<dbReference type="OrthoDB" id="8951704at2"/>
<dbReference type="UniPathway" id="UPA00659"/>
<dbReference type="Proteomes" id="UP000001171">
    <property type="component" value="Chromosome"/>
</dbReference>
<dbReference type="GO" id="GO:0005737">
    <property type="term" value="C:cytoplasm"/>
    <property type="evidence" value="ECO:0007669"/>
    <property type="project" value="UniProtKB-SubCell"/>
</dbReference>
<dbReference type="GO" id="GO:0003988">
    <property type="term" value="F:acetyl-CoA C-acyltransferase activity"/>
    <property type="evidence" value="ECO:0007669"/>
    <property type="project" value="UniProtKB-UniRule"/>
</dbReference>
<dbReference type="GO" id="GO:0006635">
    <property type="term" value="P:fatty acid beta-oxidation"/>
    <property type="evidence" value="ECO:0007669"/>
    <property type="project" value="UniProtKB-UniRule"/>
</dbReference>
<dbReference type="GO" id="GO:0010124">
    <property type="term" value="P:phenylacetate catabolic process"/>
    <property type="evidence" value="ECO:0007669"/>
    <property type="project" value="TreeGrafter"/>
</dbReference>
<dbReference type="CDD" id="cd00751">
    <property type="entry name" value="thiolase"/>
    <property type="match status" value="1"/>
</dbReference>
<dbReference type="FunFam" id="3.40.47.10:FF:000010">
    <property type="entry name" value="Acetyl-CoA acetyltransferase (Thiolase)"/>
    <property type="match status" value="1"/>
</dbReference>
<dbReference type="Gene3D" id="3.40.47.10">
    <property type="match status" value="2"/>
</dbReference>
<dbReference type="HAMAP" id="MF_01620">
    <property type="entry name" value="FadA"/>
    <property type="match status" value="1"/>
</dbReference>
<dbReference type="InterPro" id="IPR012805">
    <property type="entry name" value="FadA"/>
</dbReference>
<dbReference type="InterPro" id="IPR002155">
    <property type="entry name" value="Thiolase"/>
</dbReference>
<dbReference type="InterPro" id="IPR016039">
    <property type="entry name" value="Thiolase-like"/>
</dbReference>
<dbReference type="InterPro" id="IPR050215">
    <property type="entry name" value="Thiolase-like_sf_Thiolase"/>
</dbReference>
<dbReference type="InterPro" id="IPR020615">
    <property type="entry name" value="Thiolase_acyl_enz_int_AS"/>
</dbReference>
<dbReference type="InterPro" id="IPR020610">
    <property type="entry name" value="Thiolase_AS"/>
</dbReference>
<dbReference type="InterPro" id="IPR020617">
    <property type="entry name" value="Thiolase_C"/>
</dbReference>
<dbReference type="InterPro" id="IPR020613">
    <property type="entry name" value="Thiolase_CS"/>
</dbReference>
<dbReference type="InterPro" id="IPR020616">
    <property type="entry name" value="Thiolase_N"/>
</dbReference>
<dbReference type="NCBIfam" id="TIGR01930">
    <property type="entry name" value="AcCoA-C-Actrans"/>
    <property type="match status" value="1"/>
</dbReference>
<dbReference type="NCBIfam" id="TIGR02445">
    <property type="entry name" value="fadA"/>
    <property type="match status" value="1"/>
</dbReference>
<dbReference type="NCBIfam" id="NF006510">
    <property type="entry name" value="PRK08947.1"/>
    <property type="match status" value="1"/>
</dbReference>
<dbReference type="PANTHER" id="PTHR43853:SF11">
    <property type="entry name" value="3-KETOACYL-COA THIOLASE FADA"/>
    <property type="match status" value="1"/>
</dbReference>
<dbReference type="PANTHER" id="PTHR43853">
    <property type="entry name" value="3-KETOACYL-COA THIOLASE, PEROXISOMAL"/>
    <property type="match status" value="1"/>
</dbReference>
<dbReference type="Pfam" id="PF02803">
    <property type="entry name" value="Thiolase_C"/>
    <property type="match status" value="1"/>
</dbReference>
<dbReference type="Pfam" id="PF00108">
    <property type="entry name" value="Thiolase_N"/>
    <property type="match status" value="1"/>
</dbReference>
<dbReference type="PIRSF" id="PIRSF000429">
    <property type="entry name" value="Ac-CoA_Ac_transf"/>
    <property type="match status" value="1"/>
</dbReference>
<dbReference type="SUPFAM" id="SSF53901">
    <property type="entry name" value="Thiolase-like"/>
    <property type="match status" value="2"/>
</dbReference>
<dbReference type="PROSITE" id="PS00098">
    <property type="entry name" value="THIOLASE_1"/>
    <property type="match status" value="1"/>
</dbReference>
<dbReference type="PROSITE" id="PS00737">
    <property type="entry name" value="THIOLASE_2"/>
    <property type="match status" value="1"/>
</dbReference>
<dbReference type="PROSITE" id="PS00099">
    <property type="entry name" value="THIOLASE_3"/>
    <property type="match status" value="1"/>
</dbReference>